<reference key="1">
    <citation type="submission" date="2003-06" db="EMBL/GenBank/DDBJ databases">
        <title>The complete genome sequence of Haemophilus ducreyi.</title>
        <authorList>
            <person name="Munson R.S. Jr."/>
            <person name="Ray W.C."/>
            <person name="Mahairas G."/>
            <person name="Sabo P."/>
            <person name="Mungur R."/>
            <person name="Johnson L."/>
            <person name="Nguyen D."/>
            <person name="Wang J."/>
            <person name="Forst C."/>
            <person name="Hood L."/>
        </authorList>
    </citation>
    <scope>NUCLEOTIDE SEQUENCE [LARGE SCALE GENOMIC DNA]</scope>
    <source>
        <strain>35000HP / ATCC 700724</strain>
    </source>
</reference>
<sequence>MYGLEMLEKIKLEYDKWACLTPKNSLYDRTLVWLFLSLLMIGFIMVTSASIPVSTRLNNDPFHFAIRDSIYLACSLLAFAFVVKIPMRNWEKYNVPLFLLSLLFLASVLIFGRSVNGSIRWIQLGPINFQPAELSKLAIICYFSSFYVRKYDEMRNRSASVIRPMVILFLFSSLLLLQPDLGSVVVLFVLTFTMLFIMGAKVMQFLLLIVTASVSFILLVLTSEYRLKRVTSFLDPFADAYGDGFQLSNAQMAFGQGQLWGQGLGNSVQKLEYLPEAHTDFVMAVVAEEFGFIGIIFMVVLLLCLSFRAIKISRDALKLEARFRGFFAFGVAIWVFLQGSVNLGVASGALPTKGLTFPLVSYGGSSLVIMSVAIAILLRIDYENRLTRVGHAQIKEP</sequence>
<accession>Q7VP55</accession>
<comment type="function">
    <text evidence="2">Peptidoglycan polymerase that is essential for cell division.</text>
</comment>
<comment type="catalytic activity">
    <reaction evidence="2">
        <text>[GlcNAc-(1-&gt;4)-Mur2Ac(oyl-L-Ala-gamma-D-Glu-L-Lys-D-Ala-D-Ala)](n)-di-trans,octa-cis-undecaprenyl diphosphate + beta-D-GlcNAc-(1-&gt;4)-Mur2Ac(oyl-L-Ala-gamma-D-Glu-L-Lys-D-Ala-D-Ala)-di-trans,octa-cis-undecaprenyl diphosphate = [GlcNAc-(1-&gt;4)-Mur2Ac(oyl-L-Ala-gamma-D-Glu-L-Lys-D-Ala-D-Ala)](n+1)-di-trans,octa-cis-undecaprenyl diphosphate + di-trans,octa-cis-undecaprenyl diphosphate + H(+)</text>
        <dbReference type="Rhea" id="RHEA:23708"/>
        <dbReference type="Rhea" id="RHEA-COMP:9602"/>
        <dbReference type="Rhea" id="RHEA-COMP:9603"/>
        <dbReference type="ChEBI" id="CHEBI:15378"/>
        <dbReference type="ChEBI" id="CHEBI:58405"/>
        <dbReference type="ChEBI" id="CHEBI:60033"/>
        <dbReference type="ChEBI" id="CHEBI:78435"/>
        <dbReference type="EC" id="2.4.99.28"/>
    </reaction>
</comment>
<comment type="pathway">
    <text evidence="2">Cell wall biogenesis; peptidoglycan biosynthesis.</text>
</comment>
<comment type="subcellular location">
    <subcellularLocation>
        <location evidence="2">Cell inner membrane</location>
        <topology evidence="2">Multi-pass membrane protein</topology>
    </subcellularLocation>
    <text evidence="2">Localizes to the division septum.</text>
</comment>
<comment type="similarity">
    <text evidence="2">Belongs to the SEDS family. FtsW subfamily.</text>
</comment>
<keyword id="KW-0131">Cell cycle</keyword>
<keyword id="KW-0132">Cell division</keyword>
<keyword id="KW-0997">Cell inner membrane</keyword>
<keyword id="KW-1003">Cell membrane</keyword>
<keyword id="KW-0133">Cell shape</keyword>
<keyword id="KW-0961">Cell wall biogenesis/degradation</keyword>
<keyword id="KW-0328">Glycosyltransferase</keyword>
<keyword id="KW-0472">Membrane</keyword>
<keyword id="KW-0573">Peptidoglycan synthesis</keyword>
<keyword id="KW-1185">Reference proteome</keyword>
<keyword id="KW-0808">Transferase</keyword>
<keyword id="KW-0812">Transmembrane</keyword>
<keyword id="KW-1133">Transmembrane helix</keyword>
<proteinExistence type="inferred from homology"/>
<protein>
    <recommendedName>
        <fullName evidence="2">Probable peptidoglycan glycosyltransferase FtsW</fullName>
        <shortName evidence="2">PGT</shortName>
        <ecNumber evidence="2">2.4.99.28</ecNumber>
    </recommendedName>
    <alternativeName>
        <fullName evidence="2">Cell division protein FtsW</fullName>
    </alternativeName>
    <alternativeName>
        <fullName evidence="2">Cell wall polymerase</fullName>
    </alternativeName>
    <alternativeName>
        <fullName evidence="2">Peptidoglycan polymerase</fullName>
        <shortName evidence="2">PG polymerase</shortName>
    </alternativeName>
</protein>
<organism>
    <name type="scientific">Haemophilus ducreyi (strain 35000HP / ATCC 700724)</name>
    <dbReference type="NCBI Taxonomy" id="233412"/>
    <lineage>
        <taxon>Bacteria</taxon>
        <taxon>Pseudomonadati</taxon>
        <taxon>Pseudomonadota</taxon>
        <taxon>Gammaproteobacteria</taxon>
        <taxon>Pasteurellales</taxon>
        <taxon>Pasteurellaceae</taxon>
        <taxon>Haemophilus</taxon>
    </lineage>
</organism>
<gene>
    <name evidence="2" type="primary">ftsW</name>
    <name type="ordered locus">HD_0246</name>
</gene>
<evidence type="ECO:0000255" key="1"/>
<evidence type="ECO:0000255" key="2">
    <source>
        <dbReference type="HAMAP-Rule" id="MF_00913"/>
    </source>
</evidence>
<feature type="chain" id="PRO_0000415187" description="Probable peptidoglycan glycosyltransferase FtsW">
    <location>
        <begin position="1"/>
        <end position="397"/>
    </location>
</feature>
<feature type="topological domain" description="Cytoplasmic" evidence="1">
    <location>
        <begin position="1"/>
        <end position="30"/>
    </location>
</feature>
<feature type="transmembrane region" description="Helical" evidence="2">
    <location>
        <begin position="31"/>
        <end position="51"/>
    </location>
</feature>
<feature type="topological domain" description="Periplasmic" evidence="1">
    <location>
        <begin position="52"/>
        <end position="61"/>
    </location>
</feature>
<feature type="transmembrane region" description="Helical" evidence="2">
    <location>
        <begin position="62"/>
        <end position="82"/>
    </location>
</feature>
<feature type="topological domain" description="Cytoplasmic" evidence="1">
    <location>
        <begin position="83"/>
        <end position="94"/>
    </location>
</feature>
<feature type="transmembrane region" description="Helical" evidence="2">
    <location>
        <begin position="95"/>
        <end position="115"/>
    </location>
</feature>
<feature type="topological domain" description="Periplasmic" evidence="1">
    <location>
        <begin position="116"/>
        <end position="126"/>
    </location>
</feature>
<feature type="transmembrane region" description="Helical" evidence="2">
    <location>
        <begin position="127"/>
        <end position="146"/>
    </location>
</feature>
<feature type="topological domain" description="Cytoplasmic" evidence="1">
    <location>
        <begin position="147"/>
        <end position="158"/>
    </location>
</feature>
<feature type="transmembrane region" description="Helical" evidence="2">
    <location>
        <begin position="159"/>
        <end position="179"/>
    </location>
</feature>
<feature type="transmembrane region" description="Helical" evidence="2">
    <location>
        <begin position="180"/>
        <end position="200"/>
    </location>
</feature>
<feature type="topological domain" description="Cytoplasmic" evidence="1">
    <location>
        <position position="201"/>
    </location>
</feature>
<feature type="transmembrane region" description="Helical" evidence="2">
    <location>
        <begin position="202"/>
        <end position="222"/>
    </location>
</feature>
<feature type="topological domain" description="Periplasmic" evidence="1">
    <location>
        <begin position="223"/>
        <end position="280"/>
    </location>
</feature>
<feature type="transmembrane region" description="Helical" evidence="2">
    <location>
        <begin position="281"/>
        <end position="301"/>
    </location>
</feature>
<feature type="topological domain" description="Cytoplasmic" evidence="1">
    <location>
        <begin position="302"/>
        <end position="325"/>
    </location>
</feature>
<feature type="transmembrane region" description="Helical" evidence="2">
    <location>
        <begin position="326"/>
        <end position="346"/>
    </location>
</feature>
<feature type="topological domain" description="Periplasmic" evidence="1">
    <location>
        <begin position="347"/>
        <end position="356"/>
    </location>
</feature>
<feature type="transmembrane region" description="Helical" evidence="2">
    <location>
        <begin position="357"/>
        <end position="377"/>
    </location>
</feature>
<feature type="topological domain" description="Cytoplasmic" evidence="1">
    <location>
        <begin position="378"/>
        <end position="397"/>
    </location>
</feature>
<name>FTSW_HAEDU</name>
<dbReference type="EC" id="2.4.99.28" evidence="2"/>
<dbReference type="EMBL" id="AE017143">
    <property type="protein sequence ID" value="AAP95232.1"/>
    <property type="molecule type" value="Genomic_DNA"/>
</dbReference>
<dbReference type="SMR" id="Q7VP55"/>
<dbReference type="STRING" id="233412.HD_0246"/>
<dbReference type="KEGG" id="hdu:HD_0246"/>
<dbReference type="eggNOG" id="COG0772">
    <property type="taxonomic scope" value="Bacteria"/>
</dbReference>
<dbReference type="HOGENOM" id="CLU_029243_1_1_6"/>
<dbReference type="UniPathway" id="UPA00219"/>
<dbReference type="Proteomes" id="UP000001022">
    <property type="component" value="Chromosome"/>
</dbReference>
<dbReference type="GO" id="GO:0032153">
    <property type="term" value="C:cell division site"/>
    <property type="evidence" value="ECO:0007669"/>
    <property type="project" value="UniProtKB-UniRule"/>
</dbReference>
<dbReference type="GO" id="GO:0005886">
    <property type="term" value="C:plasma membrane"/>
    <property type="evidence" value="ECO:0007669"/>
    <property type="project" value="UniProtKB-SubCell"/>
</dbReference>
<dbReference type="GO" id="GO:0015648">
    <property type="term" value="F:lipid-linked peptidoglycan transporter activity"/>
    <property type="evidence" value="ECO:0007669"/>
    <property type="project" value="TreeGrafter"/>
</dbReference>
<dbReference type="GO" id="GO:0008955">
    <property type="term" value="F:peptidoglycan glycosyltransferase activity"/>
    <property type="evidence" value="ECO:0007669"/>
    <property type="project" value="UniProtKB-UniRule"/>
</dbReference>
<dbReference type="GO" id="GO:0071555">
    <property type="term" value="P:cell wall organization"/>
    <property type="evidence" value="ECO:0007669"/>
    <property type="project" value="UniProtKB-KW"/>
</dbReference>
<dbReference type="GO" id="GO:0043093">
    <property type="term" value="P:FtsZ-dependent cytokinesis"/>
    <property type="evidence" value="ECO:0007669"/>
    <property type="project" value="UniProtKB-UniRule"/>
</dbReference>
<dbReference type="GO" id="GO:0009252">
    <property type="term" value="P:peptidoglycan biosynthetic process"/>
    <property type="evidence" value="ECO:0007669"/>
    <property type="project" value="UniProtKB-UniRule"/>
</dbReference>
<dbReference type="GO" id="GO:0008360">
    <property type="term" value="P:regulation of cell shape"/>
    <property type="evidence" value="ECO:0007669"/>
    <property type="project" value="UniProtKB-KW"/>
</dbReference>
<dbReference type="HAMAP" id="MF_00913">
    <property type="entry name" value="PGT_FtsW_proteobact"/>
    <property type="match status" value="1"/>
</dbReference>
<dbReference type="InterPro" id="IPR018365">
    <property type="entry name" value="Cell_cycle_FtsW-rel_CS"/>
</dbReference>
<dbReference type="InterPro" id="IPR013437">
    <property type="entry name" value="FtsW"/>
</dbReference>
<dbReference type="InterPro" id="IPR001182">
    <property type="entry name" value="FtsW/RodA"/>
</dbReference>
<dbReference type="NCBIfam" id="TIGR02614">
    <property type="entry name" value="ftsW"/>
    <property type="match status" value="1"/>
</dbReference>
<dbReference type="PANTHER" id="PTHR30474">
    <property type="entry name" value="CELL CYCLE PROTEIN"/>
    <property type="match status" value="1"/>
</dbReference>
<dbReference type="PANTHER" id="PTHR30474:SF2">
    <property type="entry name" value="PEPTIDOGLYCAN GLYCOSYLTRANSFERASE FTSW-RELATED"/>
    <property type="match status" value="1"/>
</dbReference>
<dbReference type="Pfam" id="PF01098">
    <property type="entry name" value="FTSW_RODA_SPOVE"/>
    <property type="match status" value="1"/>
</dbReference>
<dbReference type="PROSITE" id="PS00428">
    <property type="entry name" value="FTSW_RODA_SPOVE"/>
    <property type="match status" value="1"/>
</dbReference>